<dbReference type="EC" id="2.3.1.46" evidence="1"/>
<dbReference type="EMBL" id="CP000438">
    <property type="protein sequence ID" value="ABJ15356.1"/>
    <property type="molecule type" value="Genomic_DNA"/>
</dbReference>
<dbReference type="SMR" id="Q02U23"/>
<dbReference type="ESTHER" id="pseae-metx">
    <property type="family name" value="Homoserine_transacetylase"/>
</dbReference>
<dbReference type="KEGG" id="pau:PA14_05080"/>
<dbReference type="PseudoCAP" id="PA14_05080"/>
<dbReference type="HOGENOM" id="CLU_028760_1_2_6"/>
<dbReference type="BioCyc" id="PAER208963:G1G74-424-MONOMER"/>
<dbReference type="UniPathway" id="UPA00051">
    <property type="reaction ID" value="UER00075"/>
</dbReference>
<dbReference type="Proteomes" id="UP000000653">
    <property type="component" value="Chromosome"/>
</dbReference>
<dbReference type="GO" id="GO:0005737">
    <property type="term" value="C:cytoplasm"/>
    <property type="evidence" value="ECO:0007669"/>
    <property type="project" value="UniProtKB-SubCell"/>
</dbReference>
<dbReference type="GO" id="GO:0004414">
    <property type="term" value="F:homoserine O-acetyltransferase activity"/>
    <property type="evidence" value="ECO:0007669"/>
    <property type="project" value="TreeGrafter"/>
</dbReference>
<dbReference type="GO" id="GO:0008899">
    <property type="term" value="F:homoserine O-succinyltransferase activity"/>
    <property type="evidence" value="ECO:0007669"/>
    <property type="project" value="UniProtKB-UniRule"/>
</dbReference>
<dbReference type="GO" id="GO:0009092">
    <property type="term" value="P:homoserine metabolic process"/>
    <property type="evidence" value="ECO:0007669"/>
    <property type="project" value="TreeGrafter"/>
</dbReference>
<dbReference type="GO" id="GO:0009086">
    <property type="term" value="P:methionine biosynthetic process"/>
    <property type="evidence" value="ECO:0007669"/>
    <property type="project" value="UniProtKB-UniRule"/>
</dbReference>
<dbReference type="FunFam" id="1.10.1740.110:FF:000001">
    <property type="entry name" value="Homoserine O-acetyltransferase"/>
    <property type="match status" value="1"/>
</dbReference>
<dbReference type="Gene3D" id="1.10.1740.110">
    <property type="match status" value="1"/>
</dbReference>
<dbReference type="Gene3D" id="3.40.50.1820">
    <property type="entry name" value="alpha/beta hydrolase"/>
    <property type="match status" value="1"/>
</dbReference>
<dbReference type="HAMAP" id="MF_00296">
    <property type="entry name" value="MetX_acyltransf"/>
    <property type="match status" value="1"/>
</dbReference>
<dbReference type="InterPro" id="IPR000073">
    <property type="entry name" value="AB_hydrolase_1"/>
</dbReference>
<dbReference type="InterPro" id="IPR029058">
    <property type="entry name" value="AB_hydrolase_fold"/>
</dbReference>
<dbReference type="InterPro" id="IPR008220">
    <property type="entry name" value="HAT_MetX-like"/>
</dbReference>
<dbReference type="NCBIfam" id="TIGR01392">
    <property type="entry name" value="homoserO_Ac_trn"/>
    <property type="match status" value="1"/>
</dbReference>
<dbReference type="NCBIfam" id="NF001209">
    <property type="entry name" value="PRK00175.1"/>
    <property type="match status" value="1"/>
</dbReference>
<dbReference type="PANTHER" id="PTHR32268">
    <property type="entry name" value="HOMOSERINE O-ACETYLTRANSFERASE"/>
    <property type="match status" value="1"/>
</dbReference>
<dbReference type="PANTHER" id="PTHR32268:SF11">
    <property type="entry name" value="HOMOSERINE O-ACETYLTRANSFERASE"/>
    <property type="match status" value="1"/>
</dbReference>
<dbReference type="Pfam" id="PF00561">
    <property type="entry name" value="Abhydrolase_1"/>
    <property type="match status" value="1"/>
</dbReference>
<dbReference type="PIRSF" id="PIRSF000443">
    <property type="entry name" value="Homoser_Ac_trans"/>
    <property type="match status" value="1"/>
</dbReference>
<dbReference type="SUPFAM" id="SSF53474">
    <property type="entry name" value="alpha/beta-Hydrolases"/>
    <property type="match status" value="1"/>
</dbReference>
<comment type="function">
    <text evidence="1">Transfers a succinyl group from succinyl-CoA to L-homoserine, forming succinyl-L-homoserine.</text>
</comment>
<comment type="catalytic activity">
    <reaction evidence="1">
        <text>L-homoserine + succinyl-CoA = O-succinyl-L-homoserine + CoA</text>
        <dbReference type="Rhea" id="RHEA:22008"/>
        <dbReference type="ChEBI" id="CHEBI:57287"/>
        <dbReference type="ChEBI" id="CHEBI:57292"/>
        <dbReference type="ChEBI" id="CHEBI:57476"/>
        <dbReference type="ChEBI" id="CHEBI:57661"/>
        <dbReference type="EC" id="2.3.1.46"/>
    </reaction>
</comment>
<comment type="pathway">
    <text evidence="1">Amino-acid biosynthesis; L-methionine biosynthesis via de novo pathway; O-succinyl-L-homoserine from L-homoserine: step 1/1.</text>
</comment>
<comment type="subunit">
    <text evidence="1">Homodimer.</text>
</comment>
<comment type="subcellular location">
    <subcellularLocation>
        <location evidence="1">Cytoplasm</location>
    </subcellularLocation>
</comment>
<comment type="similarity">
    <text evidence="1">Belongs to the AB hydrolase superfamily. MetX family.</text>
</comment>
<sequence>MPTVFPDDSVGLVSPQTLHFNEPLELTSGKSLAEYDLVIETYGELNATQSNAVLICHALSGHHHAAGYHSVDERKPGWWDSCIGPGKPIDTRKFFVVALNNLGGCNGSSGPASINPATGKVYGADFPMVTVEDWVHSQARLADRLGIRQWAAVVGGSLGGMQALQWTISYPERVRHCLCIASAPKLSAQNIAFNEVARQAILSDPEFLGGYFQEQGVIPKRGLKLARMVGHITYLSDDAMGAKFGRVLKTEKLNYDLHSVEFQVESYLRYQGEEFSTRFDANTYLLMTKALDYFDPAAAHGDDLVRTLEGVEADFCLMSFTTDWRFSPARSREIVDALIAAKKNVSYLEIDAPQGHDAFLMPIPRYLQAFSGYMNRISV</sequence>
<accession>Q02U23</accession>
<feature type="chain" id="PRO_1000021894" description="Homoserine O-succinyltransferase">
    <location>
        <begin position="1"/>
        <end position="379"/>
    </location>
</feature>
<feature type="domain" description="AB hydrolase-1" evidence="1">
    <location>
        <begin position="51"/>
        <end position="360"/>
    </location>
</feature>
<feature type="active site" description="Nucleophile" evidence="1">
    <location>
        <position position="157"/>
    </location>
</feature>
<feature type="active site" evidence="1">
    <location>
        <position position="323"/>
    </location>
</feature>
<feature type="active site" evidence="1">
    <location>
        <position position="356"/>
    </location>
</feature>
<feature type="binding site" evidence="1">
    <location>
        <position position="227"/>
    </location>
    <ligand>
        <name>substrate</name>
    </ligand>
</feature>
<feature type="binding site" evidence="1">
    <location>
        <position position="357"/>
    </location>
    <ligand>
        <name>substrate</name>
    </ligand>
</feature>
<feature type="site" description="Important for acyl-CoA specificity" evidence="1">
    <location>
        <position position="325"/>
    </location>
</feature>
<protein>
    <recommendedName>
        <fullName evidence="1">Homoserine O-succinyltransferase</fullName>
        <shortName evidence="1">HST</shortName>
        <ecNumber evidence="1">2.3.1.46</ecNumber>
    </recommendedName>
    <alternativeName>
        <fullName evidence="1">Homoserine transsuccinylase</fullName>
        <shortName evidence="1">HTS</shortName>
    </alternativeName>
</protein>
<evidence type="ECO:0000255" key="1">
    <source>
        <dbReference type="HAMAP-Rule" id="MF_00296"/>
    </source>
</evidence>
<name>METXS_PSEAB</name>
<proteinExistence type="inferred from homology"/>
<reference key="1">
    <citation type="journal article" date="2006" name="Genome Biol.">
        <title>Genomic analysis reveals that Pseudomonas aeruginosa virulence is combinatorial.</title>
        <authorList>
            <person name="Lee D.G."/>
            <person name="Urbach J.M."/>
            <person name="Wu G."/>
            <person name="Liberati N.T."/>
            <person name="Feinbaum R.L."/>
            <person name="Miyata S."/>
            <person name="Diggins L.T."/>
            <person name="He J."/>
            <person name="Saucier M."/>
            <person name="Deziel E."/>
            <person name="Friedman L."/>
            <person name="Li L."/>
            <person name="Grills G."/>
            <person name="Montgomery K."/>
            <person name="Kucherlapati R."/>
            <person name="Rahme L.G."/>
            <person name="Ausubel F.M."/>
        </authorList>
    </citation>
    <scope>NUCLEOTIDE SEQUENCE [LARGE SCALE GENOMIC DNA]</scope>
    <source>
        <strain>UCBPP-PA14</strain>
    </source>
</reference>
<gene>
    <name evidence="1" type="primary">metXS</name>
    <name type="ordered locus">PA14_05080</name>
</gene>
<organism>
    <name type="scientific">Pseudomonas aeruginosa (strain UCBPP-PA14)</name>
    <dbReference type="NCBI Taxonomy" id="208963"/>
    <lineage>
        <taxon>Bacteria</taxon>
        <taxon>Pseudomonadati</taxon>
        <taxon>Pseudomonadota</taxon>
        <taxon>Gammaproteobacteria</taxon>
        <taxon>Pseudomonadales</taxon>
        <taxon>Pseudomonadaceae</taxon>
        <taxon>Pseudomonas</taxon>
    </lineage>
</organism>
<keyword id="KW-0012">Acyltransferase</keyword>
<keyword id="KW-0028">Amino-acid biosynthesis</keyword>
<keyword id="KW-0963">Cytoplasm</keyword>
<keyword id="KW-0486">Methionine biosynthesis</keyword>
<keyword id="KW-0808">Transferase</keyword>